<protein>
    <recommendedName>
        <fullName>Putative sodium-coupled neutral amino acid transporter 11</fullName>
    </recommendedName>
    <alternativeName>
        <fullName>Solute carrier family 38 member 11</fullName>
    </alternativeName>
</protein>
<comment type="function">
    <text evidence="1">Putative sodium-dependent amino acid/proton antiporter.</text>
</comment>
<comment type="subcellular location">
    <subcellularLocation>
        <location evidence="4">Membrane</location>
        <topology evidence="4">Multi-pass membrane protein</topology>
    </subcellularLocation>
</comment>
<comment type="similarity">
    <text evidence="4">Belongs to the amino acid/polyamine transporter 2 family.</text>
</comment>
<feature type="chain" id="PRO_0000326062" description="Putative sodium-coupled neutral amino acid transporter 11">
    <location>
        <begin position="1"/>
        <end position="448"/>
    </location>
</feature>
<feature type="transmembrane region" description="Helical" evidence="2">
    <location>
        <begin position="22"/>
        <end position="42"/>
    </location>
</feature>
<feature type="transmembrane region" description="Helical" evidence="2">
    <location>
        <begin position="52"/>
        <end position="72"/>
    </location>
</feature>
<feature type="transmembrane region" description="Helical" evidence="2">
    <location>
        <begin position="94"/>
        <end position="114"/>
    </location>
</feature>
<feature type="transmembrane region" description="Helical" evidence="2">
    <location>
        <begin position="143"/>
        <end position="163"/>
    </location>
</feature>
<feature type="transmembrane region" description="Helical" evidence="2">
    <location>
        <begin position="165"/>
        <end position="185"/>
    </location>
</feature>
<feature type="transmembrane region" description="Helical" evidence="2">
    <location>
        <begin position="200"/>
        <end position="220"/>
    </location>
</feature>
<feature type="transmembrane region" description="Helical" evidence="2">
    <location>
        <begin position="246"/>
        <end position="266"/>
    </location>
</feature>
<feature type="transmembrane region" description="Helical" evidence="2">
    <location>
        <begin position="286"/>
        <end position="306"/>
    </location>
</feature>
<feature type="transmembrane region" description="Helical" evidence="2">
    <location>
        <begin position="324"/>
        <end position="344"/>
    </location>
</feature>
<feature type="transmembrane region" description="Helical" evidence="2">
    <location>
        <begin position="346"/>
        <end position="366"/>
    </location>
</feature>
<feature type="transmembrane region" description="Helical" evidence="2">
    <location>
        <begin position="389"/>
        <end position="409"/>
    </location>
</feature>
<feature type="region of interest" description="Disordered" evidence="3">
    <location>
        <begin position="1"/>
        <end position="20"/>
    </location>
</feature>
<feature type="glycosylation site" description="N-linked (GlcNAc...) asparagine" evidence="2">
    <location>
        <position position="425"/>
    </location>
</feature>
<feature type="glycosylation site" description="N-linked (GlcNAc...) asparagine" evidence="2">
    <location>
        <position position="440"/>
    </location>
</feature>
<feature type="glycosylation site" description="N-linked (GlcNAc...) asparagine" evidence="2">
    <location>
        <position position="444"/>
    </location>
</feature>
<feature type="sequence conflict" description="In Ref. 1; AAH92805." evidence="4" ref="1">
    <original>M</original>
    <variation>V</variation>
    <location>
        <position position="111"/>
    </location>
</feature>
<feature type="sequence conflict" description="In Ref. 1; AAH92805." evidence="4" ref="1">
    <original>V</original>
    <variation>G</variation>
    <location>
        <position position="332"/>
    </location>
</feature>
<feature type="sequence conflict" description="In Ref. 1; AAH92805." evidence="4" ref="1">
    <original>L</original>
    <variation>P</variation>
    <location>
        <position position="342"/>
    </location>
</feature>
<feature type="sequence conflict" description="In Ref. 1; AAI54163." evidence="4" ref="1">
    <original>T</original>
    <variation>I</variation>
    <location>
        <position position="426"/>
    </location>
</feature>
<keyword id="KW-0029">Amino-acid transport</keyword>
<keyword id="KW-0325">Glycoprotein</keyword>
<keyword id="KW-0406">Ion transport</keyword>
<keyword id="KW-0472">Membrane</keyword>
<keyword id="KW-1185">Reference proteome</keyword>
<keyword id="KW-0915">Sodium</keyword>
<keyword id="KW-0739">Sodium transport</keyword>
<keyword id="KW-0812">Transmembrane</keyword>
<keyword id="KW-1133">Transmembrane helix</keyword>
<keyword id="KW-0813">Transport</keyword>
<sequence>MESERSCLLSSHDAGKGGSSSVSSASFNFINSIIGSGIIGLPYSMSQAGLPMGLLLLILVAFITDYSIILLVRGGNLSGTHSYQSLVRSTFGQIGYIIVSVLQFLYPFIAMISYNIIAGDTLTKVFMRIPGVGPGNILTERHFVIAMSTVLFTLPLSLYRDIAKLGKVSLLSMILTFGILMTVVVRAATLGPQIPASDDAWVFARWNAIQAVAVMSFALICHHNSFMIYGSLQEPTLSRWSLVTHISVGSSVLVSAVFAAAGYATFTVYTQGDIFENYCRSDNLATFGRFCYGVSIITTFPLECFVTREVISNALFKGGELSKSSHVIITLVIISATTAISLSYDCLGIVLELNGILSAVPLMFIFPSACFLKLSNERWCRGENLIASMILVAGVFVMIIGLIMMALFPQDCSHGAEMFYCSASNTSSTASPSNILQFINTTQNTSIV</sequence>
<reference key="1">
    <citation type="submission" date="2005-04" db="EMBL/GenBank/DDBJ databases">
        <authorList>
            <consortium name="NIH - Zebrafish Gene Collection (ZGC) project"/>
        </authorList>
    </citation>
    <scope>NUCLEOTIDE SEQUENCE [LARGE SCALE MRNA]</scope>
    <source>
        <tissue>Embryo</tissue>
        <tissue>Ovary</tissue>
    </source>
</reference>
<dbReference type="EMBL" id="BC092805">
    <property type="protein sequence ID" value="AAH92805.1"/>
    <property type="molecule type" value="mRNA"/>
</dbReference>
<dbReference type="EMBL" id="BC154162">
    <property type="protein sequence ID" value="AAI54163.1"/>
    <property type="molecule type" value="mRNA"/>
</dbReference>
<dbReference type="RefSeq" id="NP_001017644.1">
    <property type="nucleotide sequence ID" value="NM_001017644.1"/>
</dbReference>
<dbReference type="SMR" id="A8KBL5"/>
<dbReference type="FunCoup" id="A8KBL5">
    <property type="interactions" value="307"/>
</dbReference>
<dbReference type="STRING" id="7955.ENSDARP00000058891"/>
<dbReference type="GlyCosmos" id="A8KBL5">
    <property type="glycosylation" value="3 sites, No reported glycans"/>
</dbReference>
<dbReference type="PaxDb" id="7955-ENSDARP00000058891"/>
<dbReference type="Ensembl" id="ENSDART00000175587">
    <property type="protein sequence ID" value="ENSDARP00000144230"/>
    <property type="gene ID" value="ENSDARG00000040257"/>
</dbReference>
<dbReference type="GeneID" id="550337"/>
<dbReference type="KEGG" id="dre:550337"/>
<dbReference type="AGR" id="ZFIN:ZDB-GENE-050417-122"/>
<dbReference type="CTD" id="151258"/>
<dbReference type="ZFIN" id="ZDB-GENE-050417-122">
    <property type="gene designation" value="slc38a11"/>
</dbReference>
<dbReference type="eggNOG" id="KOG1305">
    <property type="taxonomic scope" value="Eukaryota"/>
</dbReference>
<dbReference type="HOGENOM" id="CLU_009020_4_2_1"/>
<dbReference type="InParanoid" id="A8KBL5"/>
<dbReference type="OrthoDB" id="28208at2759"/>
<dbReference type="PhylomeDB" id="A8KBL5"/>
<dbReference type="TreeFam" id="TF328787"/>
<dbReference type="PRO" id="PR:A8KBL5"/>
<dbReference type="Proteomes" id="UP000000437">
    <property type="component" value="Chromosome 9"/>
</dbReference>
<dbReference type="Bgee" id="ENSDARG00000040257">
    <property type="expression patterns" value="Expressed in tail and 13 other cell types or tissues"/>
</dbReference>
<dbReference type="ExpressionAtlas" id="A8KBL5">
    <property type="expression patterns" value="baseline"/>
</dbReference>
<dbReference type="GO" id="GO:0016020">
    <property type="term" value="C:membrane"/>
    <property type="evidence" value="ECO:0000318"/>
    <property type="project" value="GO_Central"/>
</dbReference>
<dbReference type="GO" id="GO:0015179">
    <property type="term" value="F:L-amino acid transmembrane transporter activity"/>
    <property type="evidence" value="ECO:0000318"/>
    <property type="project" value="GO_Central"/>
</dbReference>
<dbReference type="GO" id="GO:0003333">
    <property type="term" value="P:amino acid transmembrane transport"/>
    <property type="evidence" value="ECO:0000318"/>
    <property type="project" value="GO_Central"/>
</dbReference>
<dbReference type="GO" id="GO:0006814">
    <property type="term" value="P:sodium ion transport"/>
    <property type="evidence" value="ECO:0007669"/>
    <property type="project" value="UniProtKB-KW"/>
</dbReference>
<dbReference type="InterPro" id="IPR013057">
    <property type="entry name" value="AA_transpt_TM"/>
</dbReference>
<dbReference type="PANTHER" id="PTHR22950">
    <property type="entry name" value="AMINO ACID TRANSPORTER"/>
    <property type="match status" value="1"/>
</dbReference>
<dbReference type="PANTHER" id="PTHR22950:SF458">
    <property type="entry name" value="SODIUM-COUPLED NEUTRAL AMINO ACID TRANSPORTER 11-RELATED"/>
    <property type="match status" value="1"/>
</dbReference>
<dbReference type="Pfam" id="PF01490">
    <property type="entry name" value="Aa_trans"/>
    <property type="match status" value="1"/>
</dbReference>
<name>S38AB_DANRE</name>
<gene>
    <name type="primary">slc38a11</name>
    <name type="ORF">zgc:110221</name>
</gene>
<evidence type="ECO:0000250" key="1"/>
<evidence type="ECO:0000255" key="2"/>
<evidence type="ECO:0000256" key="3">
    <source>
        <dbReference type="SAM" id="MobiDB-lite"/>
    </source>
</evidence>
<evidence type="ECO:0000305" key="4"/>
<proteinExistence type="evidence at transcript level"/>
<accession>A8KBL5</accession>
<accession>Q568L8</accession>
<organism>
    <name type="scientific">Danio rerio</name>
    <name type="common">Zebrafish</name>
    <name type="synonym">Brachydanio rerio</name>
    <dbReference type="NCBI Taxonomy" id="7955"/>
    <lineage>
        <taxon>Eukaryota</taxon>
        <taxon>Metazoa</taxon>
        <taxon>Chordata</taxon>
        <taxon>Craniata</taxon>
        <taxon>Vertebrata</taxon>
        <taxon>Euteleostomi</taxon>
        <taxon>Actinopterygii</taxon>
        <taxon>Neopterygii</taxon>
        <taxon>Teleostei</taxon>
        <taxon>Ostariophysi</taxon>
        <taxon>Cypriniformes</taxon>
        <taxon>Danionidae</taxon>
        <taxon>Danioninae</taxon>
        <taxon>Danio</taxon>
    </lineage>
</organism>